<feature type="peptide" id="PRO_0000009095" description="Fibrinopeptide B">
    <location>
        <begin position="1"/>
        <end position="21"/>
    </location>
</feature>
<feature type="modified residue" description="Pyrrolidone carboxylic acid" evidence="3">
    <location>
        <position position="1"/>
    </location>
</feature>
<feature type="modified residue" description="Sulfotyrosine" evidence="3">
    <location>
        <position position="6"/>
    </location>
</feature>
<feature type="non-terminal residue">
    <location>
        <position position="21"/>
    </location>
</feature>
<reference key="1">
    <citation type="journal article" date="1965" name="Acta Chem. Scand.">
        <title>Studies on fibrinopeptides from mammals.</title>
        <authorList>
            <person name="Blombaeck B."/>
            <person name="Blombaeck M."/>
            <person name="Grondahl N.J."/>
        </authorList>
    </citation>
    <scope>PROTEIN SEQUENCE</scope>
    <scope>PYROGLUTAMATE FORMATION AT GLN-1</scope>
    <scope>SULFATION AT TYR-6</scope>
</reference>
<evidence type="ECO:0000250" key="1">
    <source>
        <dbReference type="UniProtKB" id="E9PV24"/>
    </source>
</evidence>
<evidence type="ECO:0000250" key="2">
    <source>
        <dbReference type="UniProtKB" id="P02675"/>
    </source>
</evidence>
<evidence type="ECO:0000269" key="3">
    <source ref="1"/>
</evidence>
<gene>
    <name type="primary">FGB</name>
</gene>
<organism>
    <name type="scientific">Rangifer tarandus</name>
    <name type="common">Reindeer</name>
    <name type="synonym">Cervus tarandus</name>
    <dbReference type="NCBI Taxonomy" id="9870"/>
    <lineage>
        <taxon>Eukaryota</taxon>
        <taxon>Metazoa</taxon>
        <taxon>Chordata</taxon>
        <taxon>Craniata</taxon>
        <taxon>Vertebrata</taxon>
        <taxon>Euteleostomi</taxon>
        <taxon>Mammalia</taxon>
        <taxon>Eutheria</taxon>
        <taxon>Laurasiatheria</taxon>
        <taxon>Artiodactyla</taxon>
        <taxon>Ruminantia</taxon>
        <taxon>Pecora</taxon>
        <taxon>Cervidae</taxon>
        <taxon>Odocoileinae</taxon>
        <taxon>Rangifer</taxon>
    </lineage>
</organism>
<name>FIBB_RANTA</name>
<dbReference type="GO" id="GO:0005576">
    <property type="term" value="C:extracellular region"/>
    <property type="evidence" value="ECO:0007669"/>
    <property type="project" value="UniProtKB-SubCell"/>
</dbReference>
<dbReference type="GO" id="GO:0002250">
    <property type="term" value="P:adaptive immune response"/>
    <property type="evidence" value="ECO:0007669"/>
    <property type="project" value="UniProtKB-KW"/>
</dbReference>
<dbReference type="GO" id="GO:0007596">
    <property type="term" value="P:blood coagulation"/>
    <property type="evidence" value="ECO:0007669"/>
    <property type="project" value="UniProtKB-KW"/>
</dbReference>
<dbReference type="GO" id="GO:0045087">
    <property type="term" value="P:innate immune response"/>
    <property type="evidence" value="ECO:0007669"/>
    <property type="project" value="UniProtKB-KW"/>
</dbReference>
<accession>P14479</accession>
<protein>
    <recommendedName>
        <fullName>Fibrinogen beta chain</fullName>
    </recommendedName>
    <component>
        <recommendedName>
            <fullName>Fibrinopeptide B</fullName>
        </recommendedName>
    </component>
</protein>
<proteinExistence type="evidence at protein level"/>
<keyword id="KW-1064">Adaptive immunity</keyword>
<keyword id="KW-0094">Blood coagulation</keyword>
<keyword id="KW-0175">Coiled coil</keyword>
<keyword id="KW-0903">Direct protein sequencing</keyword>
<keyword id="KW-1015">Disulfide bond</keyword>
<keyword id="KW-0356">Hemostasis</keyword>
<keyword id="KW-0391">Immunity</keyword>
<keyword id="KW-0399">Innate immunity</keyword>
<keyword id="KW-0873">Pyrrolidone carboxylic acid</keyword>
<keyword id="KW-0964">Secreted</keyword>
<keyword id="KW-0765">Sulfation</keyword>
<sequence length="21" mass="2510">QHLADYDEVEDDRAKLHLDAR</sequence>
<comment type="function">
    <text evidence="1">Cleaved by the protease thrombin to yield monomers which, together with fibrinogen alpha (FGA) and fibrinogen gamma (FGG), polymerize to form an insoluble fibrin matrix. Fibrin has a major function in hemostasis as one of the primary components of blood clots. In addition, functions during the early stages of wound repair to stabilize the lesion and guide cell migration during re-epithelialization. Was originally thought to be essential for platelet aggregation, based on in vitro studies using anticoagulated blood. However subsequent studies have shown that it is not absolutely required for thrombus formation in vivo. Enhances expression of SELP in activated platelets. Maternal fibrinogen is essential for successful pregnancy. Fibrin deposition is also associated with infection, where it protects against IFNG-mediated hemorrhage. May also facilitate the antibacterial immune response via both innate and T-cell mediated pathways.</text>
</comment>
<comment type="subunit">
    <text evidence="2">Heterohexamer; disulfide linked. Contains 2 sets of 3 non-identical chains (alpha, beta and gamma). The 2 heterotrimers are in head to head conformation with the N-termini in a small central domain (By similarity).</text>
</comment>
<comment type="subcellular location">
    <subcellularLocation>
        <location>Secreted</location>
    </subcellularLocation>
</comment>
<comment type="domain">
    <text evidence="2">A long coiled coil structure formed by 3 polypeptide chains connects the central nodule to the C-terminal domains (distal nodules). The long C-terminal ends of the alpha chains fold back, contributing a fourth strand to the coiled coil structure.</text>
</comment>
<comment type="PTM">
    <text>Conversion of fibrinogen to fibrin is triggered by thrombin, which cleaves fibrinopeptides A and B from alpha and beta chains, and thus exposes the N-terminal polymerization sites responsible for the formation of the soft clot.</text>
</comment>